<keyword id="KW-0012">Acyltransferase</keyword>
<keyword id="KW-0479">Metal-binding</keyword>
<keyword id="KW-1185">Reference proteome</keyword>
<keyword id="KW-0808">Transferase</keyword>
<keyword id="KW-0862">Zinc</keyword>
<name>3OXCE_CUPNH</name>
<accession>Q0KAA1</accession>
<comment type="function">
    <text evidence="2">Catalyzes the condensation of 3-oxoadipate (beta-ketoadipate) and acetyl-CoA, forming acetoacetate and succinyl-CoA (PubMed:24240508). Is likely involved is the degradation of 3-oxoadipate through an alternative pathway, within catechol degradation (PubMed:24240508).</text>
</comment>
<comment type="catalytic activity">
    <reaction evidence="2">
        <text>3-oxoadipate + acetyl-CoA = acetoacetate + succinyl-CoA</text>
        <dbReference type="Rhea" id="RHEA:79651"/>
        <dbReference type="ChEBI" id="CHEBI:13705"/>
        <dbReference type="ChEBI" id="CHEBI:15775"/>
        <dbReference type="ChEBI" id="CHEBI:57288"/>
        <dbReference type="ChEBI" id="CHEBI:57292"/>
        <dbReference type="EC" id="2.3.1.318"/>
    </reaction>
</comment>
<comment type="cofactor">
    <cofactor evidence="1">
        <name>Zn(2+)</name>
        <dbReference type="ChEBI" id="CHEBI:29105"/>
    </cofactor>
</comment>
<comment type="biophysicochemical properties">
    <kinetics>
        <KM evidence="2">580 uM for acetyl-CoA</KM>
        <KM evidence="2">735 uM for 3-oxoadipate</KM>
        <KM evidence="2">1350 uM for beta-ketoglutarate</KM>
        <KM evidence="2">1900 uM for beta-ketohexanoate</KM>
        <text evidence="2">kcat is 4.70 sec(-1) with acetyl-CoA as substrate. kcat is 4.70 sec(-1) with 3-oxoadipate as substrate. kcat is 1.15 sec(-1) with beta-ketoglutarate as substrate. kcat is 0.20 sec(-1) with beta-ketohexanoate as substrate.</text>
    </kinetics>
</comment>
<comment type="similarity">
    <text evidence="5">Belongs to the BKACE family.</text>
</comment>
<dbReference type="EC" id="2.3.1.318" evidence="2"/>
<dbReference type="EMBL" id="AM260479">
    <property type="protein sequence ID" value="CAJ93070.1"/>
    <property type="molecule type" value="Genomic_DNA"/>
</dbReference>
<dbReference type="EMBL" id="CP039287">
    <property type="protein sequence ID" value="QCC00902.1"/>
    <property type="molecule type" value="Genomic_DNA"/>
</dbReference>
<dbReference type="RefSeq" id="WP_010811730.1">
    <property type="nucleotide sequence ID" value="NZ_CP039287.1"/>
</dbReference>
<dbReference type="STRING" id="381666.H16_A1969"/>
<dbReference type="KEGG" id="reh:H16_A1969"/>
<dbReference type="PATRIC" id="fig|381666.6.peg.2377"/>
<dbReference type="eggNOG" id="COG3246">
    <property type="taxonomic scope" value="Bacteria"/>
</dbReference>
<dbReference type="HOGENOM" id="CLU_065536_2_0_4"/>
<dbReference type="OrthoDB" id="9155960at2"/>
<dbReference type="Proteomes" id="UP000008210">
    <property type="component" value="Chromosome 1"/>
</dbReference>
<dbReference type="Proteomes" id="UP000296079">
    <property type="component" value="Chromosome 1"/>
</dbReference>
<dbReference type="GO" id="GO:0043720">
    <property type="term" value="F:3-keto-5-aminohexanoate cleavage activity"/>
    <property type="evidence" value="ECO:0007669"/>
    <property type="project" value="InterPro"/>
</dbReference>
<dbReference type="GO" id="GO:0046872">
    <property type="term" value="F:metal ion binding"/>
    <property type="evidence" value="ECO:0007669"/>
    <property type="project" value="UniProtKB-KW"/>
</dbReference>
<dbReference type="Gene3D" id="3.20.20.70">
    <property type="entry name" value="Aldolase class I"/>
    <property type="match status" value="1"/>
</dbReference>
<dbReference type="InterPro" id="IPR013785">
    <property type="entry name" value="Aldolase_TIM"/>
</dbReference>
<dbReference type="InterPro" id="IPR008567">
    <property type="entry name" value="BKACE"/>
</dbReference>
<dbReference type="PANTHER" id="PTHR37418:SF2">
    <property type="entry name" value="3-KETO-5-AMINOHEXANOATE CLEAVAGE ENZYME"/>
    <property type="match status" value="1"/>
</dbReference>
<dbReference type="PANTHER" id="PTHR37418">
    <property type="entry name" value="3-KETO-5-AMINOHEXANOATE CLEAVAGE ENZYME-RELATED"/>
    <property type="match status" value="1"/>
</dbReference>
<dbReference type="Pfam" id="PF05853">
    <property type="entry name" value="BKACE"/>
    <property type="match status" value="1"/>
</dbReference>
<feature type="chain" id="PRO_0000461639" description="3-oxoadipate:acetyl-CoA acetyltransferase">
    <location>
        <begin position="1"/>
        <end position="284"/>
    </location>
</feature>
<feature type="binding site" evidence="1">
    <location>
        <position position="47"/>
    </location>
    <ligand>
        <name>Zn(2+)</name>
        <dbReference type="ChEBI" id="CHEBI:29105"/>
    </ligand>
</feature>
<feature type="binding site" evidence="1">
    <location>
        <position position="49"/>
    </location>
    <ligand>
        <name>Zn(2+)</name>
        <dbReference type="ChEBI" id="CHEBI:29105"/>
    </ligand>
</feature>
<feature type="binding site" evidence="1">
    <location>
        <position position="229"/>
    </location>
    <ligand>
        <name>Zn(2+)</name>
        <dbReference type="ChEBI" id="CHEBI:29105"/>
    </ligand>
</feature>
<reference evidence="6" key="1">
    <citation type="journal article" date="2006" name="Nat. Biotechnol.">
        <title>Genome sequence of the bioplastic-producing 'Knallgas' bacterium Ralstonia eutropha H16.</title>
        <authorList>
            <person name="Pohlmann A."/>
            <person name="Fricke W.F."/>
            <person name="Reinecke F."/>
            <person name="Kusian B."/>
            <person name="Liesegang H."/>
            <person name="Cramm R."/>
            <person name="Eitinger T."/>
            <person name="Ewering C."/>
            <person name="Poetter M."/>
            <person name="Schwartz E."/>
            <person name="Strittmatter A."/>
            <person name="Voss I."/>
            <person name="Gottschalk G."/>
            <person name="Steinbuechel A."/>
            <person name="Friedrich B."/>
            <person name="Bowien B."/>
        </authorList>
    </citation>
    <scope>NUCLEOTIDE SEQUENCE [LARGE SCALE GENOMIC DNA]</scope>
    <source>
        <strain>ATCC 17699 / DSM 428 / KCTC 22496 / NCIMB 10442 / H16 / Stanier 337</strain>
    </source>
</reference>
<reference evidence="7" key="2">
    <citation type="submission" date="2019-04" db="EMBL/GenBank/DDBJ databases">
        <title>Long-read de novo sequencing of Cupriavidus necator H16.</title>
        <authorList>
            <person name="Little G.T."/>
            <person name="Ehsaan M."/>
            <person name="Arenas-Lopez C."/>
            <person name="Jawed K."/>
            <person name="Winzer K."/>
            <person name="Kovacs K."/>
            <person name="Malys N."/>
            <person name="Minton N.P."/>
        </authorList>
    </citation>
    <scope>NUCLEOTIDE SEQUENCE [LARGE SCALE GENOMIC DNA]</scope>
    <source>
        <strain>ATCC 17699 / DSM 428 / KCTC 22496 / NCIMB 10442 / H16 / Stanier 337</strain>
    </source>
</reference>
<reference key="3">
    <citation type="journal article" date="2014" name="Nat. Chem. Biol.">
        <title>Revealing the hidden functional diversity of an enzyme family.</title>
        <authorList>
            <person name="Bastard K."/>
            <person name="Smith A.A."/>
            <person name="Vergne-Vaxelaire C."/>
            <person name="Perret A."/>
            <person name="Zaparucha A."/>
            <person name="De Melo-Minardi R."/>
            <person name="Mariage A."/>
            <person name="Boutard M."/>
            <person name="Debard A."/>
            <person name="Lechaplais C."/>
            <person name="Pelle C."/>
            <person name="Pellouin V."/>
            <person name="Perchat N."/>
            <person name="Petit J.L."/>
            <person name="Kreimeyer A."/>
            <person name="Medigue C."/>
            <person name="Weissenbach J."/>
            <person name="Artiguenave F."/>
            <person name="De Berardinis V."/>
            <person name="Vallenet D."/>
            <person name="Salanoubat M."/>
        </authorList>
    </citation>
    <scope>FUNCTION</scope>
    <scope>CATALYTIC ACTIVITY</scope>
    <scope>BIOPHYSICOCHEMICAL PROPERTIES</scope>
</reference>
<organism>
    <name type="scientific">Cupriavidus necator (strain ATCC 17699 / DSM 428 / KCTC 22496 / NCIMB 10442 / H16 / Stanier 337)</name>
    <name type="common">Ralstonia eutropha</name>
    <dbReference type="NCBI Taxonomy" id="381666"/>
    <lineage>
        <taxon>Bacteria</taxon>
        <taxon>Pseudomonadati</taxon>
        <taxon>Pseudomonadota</taxon>
        <taxon>Betaproteobacteria</taxon>
        <taxon>Burkholderiales</taxon>
        <taxon>Burkholderiaceae</taxon>
        <taxon>Cupriavidus</taxon>
    </lineage>
</organism>
<gene>
    <name evidence="6" type="ordered locus">H16_A1969</name>
    <name evidence="7" type="ORF">E6A55_10065</name>
</gene>
<proteinExistence type="evidence at protein level"/>
<protein>
    <recommendedName>
        <fullName evidence="4">3-oxoadipate:acetyl-CoA acetyltransferase</fullName>
        <ecNumber evidence="2">2.3.1.318</ecNumber>
    </recommendedName>
    <alternativeName>
        <fullName evidence="4">3-oxoadipate cleavage enzyme</fullName>
    </alternativeName>
    <alternativeName>
        <fullName evidence="3">BKACE_378</fullName>
    </alternativeName>
</protein>
<sequence>MTQPCIISVAITGSLPRKRDNPAVPITVSEQVESTQAAFEAGATLVHLHVRNDDETPSSEPDRFARVLEGIRKHAPGIITQVSTGGRSGAGRERGGMLSLRPDMASLATGSVNFPTRVYDNPPDLVDWLAAEMKAYAIKPEIEAFDLSMIFQAVAMQQAGKIDGALHIQFVMGIKNAMPVDREVLAFYVHTLRRLAPDATWTGAGIGRDQLTMARWSLELGGHCRTGLEDNVRLDKQTLAPSNAALVSQVAALCEEYGRPVATVAQARALLGLPSMEIDGRSPW</sequence>
<evidence type="ECO:0000250" key="1">
    <source>
        <dbReference type="UniProtKB" id="B0VHH0"/>
    </source>
</evidence>
<evidence type="ECO:0000269" key="2">
    <source>
    </source>
</evidence>
<evidence type="ECO:0000303" key="3">
    <source>
    </source>
</evidence>
<evidence type="ECO:0000305" key="4"/>
<evidence type="ECO:0000305" key="5">
    <source>
    </source>
</evidence>
<evidence type="ECO:0000312" key="6">
    <source>
        <dbReference type="EMBL" id="CAJ93070.1"/>
    </source>
</evidence>
<evidence type="ECO:0000312" key="7">
    <source>
        <dbReference type="EMBL" id="QCC00902.1"/>
    </source>
</evidence>